<gene>
    <name type="ordered locus">War-028</name>
</gene>
<comment type="function">
    <text evidence="1">Plays a role in virus cell tropism, and may be required for efficient virus replication in macrophages.</text>
</comment>
<comment type="induction">
    <text evidence="2">Expressed in the early phase of the viral replicative cycle.</text>
</comment>
<comment type="similarity">
    <text evidence="2">Belongs to the asfivirus MGF 360 family.</text>
</comment>
<dbReference type="EMBL" id="AY261366">
    <property type="status" value="NOT_ANNOTATED_CDS"/>
    <property type="molecule type" value="Genomic_DNA"/>
</dbReference>
<dbReference type="SMR" id="P0C9N6"/>
<dbReference type="Proteomes" id="UP000000858">
    <property type="component" value="Segment"/>
</dbReference>
<dbReference type="GO" id="GO:0042330">
    <property type="term" value="P:taxis"/>
    <property type="evidence" value="ECO:0007669"/>
    <property type="project" value="InterPro"/>
</dbReference>
<dbReference type="InterPro" id="IPR002595">
    <property type="entry name" value="ASFV_MGF360"/>
</dbReference>
<dbReference type="Pfam" id="PF01671">
    <property type="entry name" value="ASFV_360"/>
    <property type="match status" value="1"/>
</dbReference>
<reference key="1">
    <citation type="submission" date="2003-03" db="EMBL/GenBank/DDBJ databases">
        <title>African swine fever virus genomes.</title>
        <authorList>
            <person name="Kutish G.F."/>
            <person name="Rock D.L."/>
        </authorList>
    </citation>
    <scope>NUCLEOTIDE SEQUENCE [LARGE SCALE GENOMIC DNA]</scope>
</reference>
<organism>
    <name type="scientific">African swine fever virus (isolate Warthog/Namibia/Wart80/1980)</name>
    <name type="common">ASFV</name>
    <dbReference type="NCBI Taxonomy" id="561444"/>
    <lineage>
        <taxon>Viruses</taxon>
        <taxon>Varidnaviria</taxon>
        <taxon>Bamfordvirae</taxon>
        <taxon>Nucleocytoviricota</taxon>
        <taxon>Pokkesviricetes</taxon>
        <taxon>Asfuvirales</taxon>
        <taxon>Asfarviridae</taxon>
        <taxon>Asfivirus</taxon>
        <taxon>African swine fever virus</taxon>
    </lineage>
</organism>
<protein>
    <recommendedName>
        <fullName>Protein MGF 360-8L</fullName>
    </recommendedName>
</protein>
<keyword id="KW-0244">Early protein</keyword>
<accession>P0C9N6</accession>
<organismHost>
    <name type="scientific">Ornithodoros</name>
    <name type="common">relapsing fever ticks</name>
    <dbReference type="NCBI Taxonomy" id="6937"/>
</organismHost>
<organismHost>
    <name type="scientific">Phacochoerus aethiopicus</name>
    <name type="common">Warthog</name>
    <dbReference type="NCBI Taxonomy" id="85517"/>
</organismHost>
<organismHost>
    <name type="scientific">Phacochoerus africanus</name>
    <name type="common">Warthog</name>
    <dbReference type="NCBI Taxonomy" id="41426"/>
</organismHost>
<organismHost>
    <name type="scientific">Potamochoerus larvatus</name>
    <name type="common">Bushpig</name>
    <dbReference type="NCBI Taxonomy" id="273792"/>
</organismHost>
<organismHost>
    <name type="scientific">Sus scrofa</name>
    <name type="common">Pig</name>
    <dbReference type="NCBI Taxonomy" id="9823"/>
</organismHost>
<sequence>MLSLQTLAKKAVAKQSVPEEYHYILKYCGLWWQNKPISLCHYCNYVILSSTPFKGELLHLDVALIMAIKENNYDVIRLFTEWGANIYYGLTCARTEQTQELCRQLGAKDSLNNKEIFTGLMRHKTSNNIILCHEIFDKNPMLETLNVQEMGEEIHRELKLFIFYILDNVPMNVLIKYWYAIAVKYKLKRAISFFYQTYGHLSMWRLMCAIYFNNVFDLHEIYEQKIVHMDIDKMMKLACMQDYNFLTIYYCFVLGGDIDKAITVTQWHHQTNNLYFCKDLKDLKQNILTARPLLLPNITDPKKIYTMLKNYLPTSSNSL</sequence>
<evidence type="ECO:0000250" key="1">
    <source>
        <dbReference type="UniProtKB" id="P23162"/>
    </source>
</evidence>
<evidence type="ECO:0000305" key="2"/>
<feature type="chain" id="PRO_0000373263" description="Protein MGF 360-8L">
    <location>
        <begin position="1"/>
        <end position="319"/>
    </location>
</feature>
<proteinExistence type="inferred from homology"/>
<name>3608L_ASFWA</name>